<protein>
    <recommendedName>
        <fullName evidence="5">NBPF family member NBPF8</fullName>
    </recommendedName>
    <alternativeName>
        <fullName>Neuroblastoma breakpoint family member 8</fullName>
    </alternativeName>
</protein>
<evidence type="ECO:0000255" key="1"/>
<evidence type="ECO:0000255" key="2">
    <source>
        <dbReference type="PROSITE-ProRule" id="PRU00647"/>
    </source>
</evidence>
<evidence type="ECO:0000256" key="3">
    <source>
        <dbReference type="SAM" id="MobiDB-lite"/>
    </source>
</evidence>
<evidence type="ECO:0000269" key="4">
    <source>
    </source>
</evidence>
<evidence type="ECO:0000305" key="5"/>
<evidence type="ECO:0000312" key="6">
    <source>
        <dbReference type="HGNC" id="HGNC:31990"/>
    </source>
</evidence>
<keyword id="KW-0175">Coiled coil</keyword>
<keyword id="KW-0963">Cytoplasm</keyword>
<keyword id="KW-1185">Reference proteome</keyword>
<keyword id="KW-0677">Repeat</keyword>
<reference key="1">
    <citation type="journal article" date="2006" name="Nature">
        <title>The DNA sequence and biological annotation of human chromosome 1.</title>
        <authorList>
            <person name="Gregory S.G."/>
            <person name="Barlow K.F."/>
            <person name="McLay K.E."/>
            <person name="Kaul R."/>
            <person name="Swarbreck D."/>
            <person name="Dunham A."/>
            <person name="Scott C.E."/>
            <person name="Howe K.L."/>
            <person name="Woodfine K."/>
            <person name="Spencer C.C.A."/>
            <person name="Jones M.C."/>
            <person name="Gillson C."/>
            <person name="Searle S."/>
            <person name="Zhou Y."/>
            <person name="Kokocinski F."/>
            <person name="McDonald L."/>
            <person name="Evans R."/>
            <person name="Phillips K."/>
            <person name="Atkinson A."/>
            <person name="Cooper R."/>
            <person name="Jones C."/>
            <person name="Hall R.E."/>
            <person name="Andrews T.D."/>
            <person name="Lloyd C."/>
            <person name="Ainscough R."/>
            <person name="Almeida J.P."/>
            <person name="Ambrose K.D."/>
            <person name="Anderson F."/>
            <person name="Andrew R.W."/>
            <person name="Ashwell R.I.S."/>
            <person name="Aubin K."/>
            <person name="Babbage A.K."/>
            <person name="Bagguley C.L."/>
            <person name="Bailey J."/>
            <person name="Beasley H."/>
            <person name="Bethel G."/>
            <person name="Bird C.P."/>
            <person name="Bray-Allen S."/>
            <person name="Brown J.Y."/>
            <person name="Brown A.J."/>
            <person name="Buckley D."/>
            <person name="Burton J."/>
            <person name="Bye J."/>
            <person name="Carder C."/>
            <person name="Chapman J.C."/>
            <person name="Clark S.Y."/>
            <person name="Clarke G."/>
            <person name="Clee C."/>
            <person name="Cobley V."/>
            <person name="Collier R.E."/>
            <person name="Corby N."/>
            <person name="Coville G.J."/>
            <person name="Davies J."/>
            <person name="Deadman R."/>
            <person name="Dunn M."/>
            <person name="Earthrowl M."/>
            <person name="Ellington A.G."/>
            <person name="Errington H."/>
            <person name="Frankish A."/>
            <person name="Frankland J."/>
            <person name="French L."/>
            <person name="Garner P."/>
            <person name="Garnett J."/>
            <person name="Gay L."/>
            <person name="Ghori M.R.J."/>
            <person name="Gibson R."/>
            <person name="Gilby L.M."/>
            <person name="Gillett W."/>
            <person name="Glithero R.J."/>
            <person name="Grafham D.V."/>
            <person name="Griffiths C."/>
            <person name="Griffiths-Jones S."/>
            <person name="Grocock R."/>
            <person name="Hammond S."/>
            <person name="Harrison E.S.I."/>
            <person name="Hart E."/>
            <person name="Haugen E."/>
            <person name="Heath P.D."/>
            <person name="Holmes S."/>
            <person name="Holt K."/>
            <person name="Howden P.J."/>
            <person name="Hunt A.R."/>
            <person name="Hunt S.E."/>
            <person name="Hunter G."/>
            <person name="Isherwood J."/>
            <person name="James R."/>
            <person name="Johnson C."/>
            <person name="Johnson D."/>
            <person name="Joy A."/>
            <person name="Kay M."/>
            <person name="Kershaw J.K."/>
            <person name="Kibukawa M."/>
            <person name="Kimberley A.M."/>
            <person name="King A."/>
            <person name="Knights A.J."/>
            <person name="Lad H."/>
            <person name="Laird G."/>
            <person name="Lawlor S."/>
            <person name="Leongamornlert D.A."/>
            <person name="Lloyd D.M."/>
            <person name="Loveland J."/>
            <person name="Lovell J."/>
            <person name="Lush M.J."/>
            <person name="Lyne R."/>
            <person name="Martin S."/>
            <person name="Mashreghi-Mohammadi M."/>
            <person name="Matthews L."/>
            <person name="Matthews N.S.W."/>
            <person name="McLaren S."/>
            <person name="Milne S."/>
            <person name="Mistry S."/>
            <person name="Moore M.J.F."/>
            <person name="Nickerson T."/>
            <person name="O'Dell C.N."/>
            <person name="Oliver K."/>
            <person name="Palmeiri A."/>
            <person name="Palmer S.A."/>
            <person name="Parker A."/>
            <person name="Patel D."/>
            <person name="Pearce A.V."/>
            <person name="Peck A.I."/>
            <person name="Pelan S."/>
            <person name="Phelps K."/>
            <person name="Phillimore B.J."/>
            <person name="Plumb R."/>
            <person name="Rajan J."/>
            <person name="Raymond C."/>
            <person name="Rouse G."/>
            <person name="Saenphimmachak C."/>
            <person name="Sehra H.K."/>
            <person name="Sheridan E."/>
            <person name="Shownkeen R."/>
            <person name="Sims S."/>
            <person name="Skuce C.D."/>
            <person name="Smith M."/>
            <person name="Steward C."/>
            <person name="Subramanian S."/>
            <person name="Sycamore N."/>
            <person name="Tracey A."/>
            <person name="Tromans A."/>
            <person name="Van Helmond Z."/>
            <person name="Wall M."/>
            <person name="Wallis J.M."/>
            <person name="White S."/>
            <person name="Whitehead S.L."/>
            <person name="Wilkinson J.E."/>
            <person name="Willey D.L."/>
            <person name="Williams H."/>
            <person name="Wilming L."/>
            <person name="Wray P.W."/>
            <person name="Wu Z."/>
            <person name="Coulson A."/>
            <person name="Vaudin M."/>
            <person name="Sulston J.E."/>
            <person name="Durbin R.M."/>
            <person name="Hubbard T."/>
            <person name="Wooster R."/>
            <person name="Dunham I."/>
            <person name="Carter N.P."/>
            <person name="McVean G."/>
            <person name="Ross M.T."/>
            <person name="Harrow J."/>
            <person name="Olson M.V."/>
            <person name="Beck S."/>
            <person name="Rogers J."/>
            <person name="Bentley D.R."/>
        </authorList>
    </citation>
    <scope>NUCLEOTIDE SEQUENCE [LARGE SCALE GENOMIC DNA]</scope>
</reference>
<reference key="2">
    <citation type="journal article" date="2005" name="Mol. Biol. Evol.">
        <title>A novel gene family NBPF: intricate structure generated by gene duplications during primate evolution.</title>
        <authorList>
            <person name="Vandepoele K."/>
            <person name="Van Roy N."/>
            <person name="Staes K."/>
            <person name="Speleman F."/>
            <person name="van Roy F."/>
        </authorList>
    </citation>
    <scope>NUCLEOTIDE SEQUENCE [MRNA]</scope>
    <scope>TISSUE SPECIFICITY</scope>
    <source>
        <tissue>Mammary gland</tissue>
    </source>
</reference>
<dbReference type="EMBL" id="AC241952">
    <property type="status" value="NOT_ANNOTATED_CDS"/>
    <property type="molecule type" value="Genomic_DNA"/>
</dbReference>
<dbReference type="EMBL" id="BX842679">
    <property type="status" value="NOT_ANNOTATED_CDS"/>
    <property type="molecule type" value="Genomic_DNA"/>
</dbReference>
<dbReference type="EMBL" id="AY894573">
    <property type="protein sequence ID" value="AAX85112.1"/>
    <property type="status" value="ALT_SEQ"/>
    <property type="molecule type" value="mRNA"/>
</dbReference>
<dbReference type="CCDS" id="CCDS91029.1"/>
<dbReference type="RefSeq" id="NP_001032590.2">
    <property type="nucleotide sequence ID" value="NM_001037501.5"/>
</dbReference>
<dbReference type="SMR" id="Q3BBV2"/>
<dbReference type="FunCoup" id="Q3BBV2">
    <property type="interactions" value="59"/>
</dbReference>
<dbReference type="IntAct" id="Q3BBV2">
    <property type="interactions" value="4"/>
</dbReference>
<dbReference type="MINT" id="Q3BBV2"/>
<dbReference type="GlyGen" id="Q3BBV2">
    <property type="glycosylation" value="1 site"/>
</dbReference>
<dbReference type="iPTMnet" id="Q3BBV2"/>
<dbReference type="PhosphoSitePlus" id="Q3BBV2"/>
<dbReference type="BioMuta" id="HGNC:31990"/>
<dbReference type="DMDM" id="121942441"/>
<dbReference type="jPOST" id="Q3BBV2"/>
<dbReference type="MassIVE" id="Q3BBV2"/>
<dbReference type="PeptideAtlas" id="Q3BBV2"/>
<dbReference type="ProteomicsDB" id="61676"/>
<dbReference type="Ensembl" id="ENST00000698216.1">
    <property type="protein sequence ID" value="ENSP00000513610.1"/>
    <property type="gene ID" value="ENSG00000270231.5"/>
</dbReference>
<dbReference type="GeneID" id="728841"/>
<dbReference type="KEGG" id="hsa:728841"/>
<dbReference type="MANE-Select" id="ENST00000698216.1">
    <property type="protein sequence ID" value="ENSP00000513610.1"/>
    <property type="RefSeq nucleotide sequence ID" value="NM_001037501.5"/>
    <property type="RefSeq protein sequence ID" value="NP_001032590.2"/>
</dbReference>
<dbReference type="AGR" id="HGNC:31990"/>
<dbReference type="CTD" id="728841"/>
<dbReference type="GeneCards" id="NBPF8"/>
<dbReference type="HGNC" id="HGNC:31990">
    <property type="gene designation" value="NBPF8"/>
</dbReference>
<dbReference type="MIM" id="613998">
    <property type="type" value="gene"/>
</dbReference>
<dbReference type="neXtProt" id="NX_Q3BBV2"/>
<dbReference type="OpenTargets" id="ENSG00000270231"/>
<dbReference type="PharmGKB" id="PA142671289"/>
<dbReference type="GeneTree" id="ENSGT00420000029746"/>
<dbReference type="InParanoid" id="Q3BBV2"/>
<dbReference type="OrthoDB" id="16206at9604"/>
<dbReference type="PAN-GO" id="Q3BBV2">
    <property type="GO annotations" value="0 GO annotations based on evolutionary models"/>
</dbReference>
<dbReference type="PhylomeDB" id="Q3BBV2"/>
<dbReference type="PathwayCommons" id="Q3BBV2"/>
<dbReference type="SignaLink" id="Q3BBV2"/>
<dbReference type="ChiTaRS" id="NBPF8">
    <property type="organism name" value="human"/>
</dbReference>
<dbReference type="Pharos" id="Q3BBV2">
    <property type="development level" value="Tdark"/>
</dbReference>
<dbReference type="PRO" id="PR:Q3BBV2"/>
<dbReference type="Proteomes" id="UP000005640">
    <property type="component" value="Chromosome 1"/>
</dbReference>
<dbReference type="RNAct" id="Q3BBV2">
    <property type="molecule type" value="protein"/>
</dbReference>
<dbReference type="GO" id="GO:0005737">
    <property type="term" value="C:cytoplasm"/>
    <property type="evidence" value="ECO:0007669"/>
    <property type="project" value="UniProtKB-SubCell"/>
</dbReference>
<dbReference type="InterPro" id="IPR055306">
    <property type="entry name" value="NBPF"/>
</dbReference>
<dbReference type="InterPro" id="IPR010630">
    <property type="entry name" value="Olduvai_dom"/>
</dbReference>
<dbReference type="PANTHER" id="PTHR14199:SF35">
    <property type="entry name" value="NEUROBLASTOMA BREAKPOINT FAMILY MEMBER 1-RELATED"/>
    <property type="match status" value="1"/>
</dbReference>
<dbReference type="PANTHER" id="PTHR14199">
    <property type="entry name" value="NEUROBLASTOMA BREAKPOINT FAMILY MEMBER 6-LIKE PROTEIN"/>
    <property type="match status" value="1"/>
</dbReference>
<dbReference type="Pfam" id="PF06758">
    <property type="entry name" value="Olduvai"/>
    <property type="match status" value="7"/>
</dbReference>
<dbReference type="SMART" id="SM01148">
    <property type="entry name" value="DUF1220"/>
    <property type="match status" value="7"/>
</dbReference>
<dbReference type="PROSITE" id="PS51316">
    <property type="entry name" value="ODV"/>
    <property type="match status" value="7"/>
</dbReference>
<name>NBPF8_HUMAN</name>
<comment type="subcellular location">
    <subcellularLocation>
        <location evidence="5">Cytoplasm</location>
    </subcellularLocation>
</comment>
<comment type="tissue specificity">
    <text evidence="4">Expressed in the mammary gland.</text>
</comment>
<comment type="miscellaneous">
    <text>Encoded by one of the numerous copies of NBPF genes clustered in the p36, p12 and q21 region of the chromosome 1.</text>
</comment>
<comment type="similarity">
    <text evidence="5">Belongs to the NBPF family.</text>
</comment>
<comment type="sequence caution" evidence="5">
    <conflict type="miscellaneous discrepancy">
        <sequence resource="EMBL-CDS" id="AAX85112"/>
    </conflict>
</comment>
<feature type="chain" id="PRO_0000288043" description="NBPF family member NBPF8">
    <location>
        <begin position="1"/>
        <end position="942"/>
    </location>
</feature>
<feature type="domain" description="Olduvai 1" evidence="2">
    <location>
        <begin position="165"/>
        <end position="259"/>
    </location>
</feature>
<feature type="domain" description="Olduvai 2" evidence="2">
    <location>
        <begin position="436"/>
        <end position="528"/>
    </location>
</feature>
<feature type="domain" description="Olduvai 3" evidence="2">
    <location>
        <begin position="529"/>
        <end position="617"/>
    </location>
</feature>
<feature type="domain" description="Olduvai 4" evidence="2">
    <location>
        <begin position="620"/>
        <end position="675"/>
    </location>
</feature>
<feature type="domain" description="Olduvai 5" evidence="2">
    <location>
        <begin position="676"/>
        <end position="767"/>
    </location>
</feature>
<feature type="domain" description="Olduvai 6" evidence="2">
    <location>
        <begin position="770"/>
        <end position="843"/>
    </location>
</feature>
<feature type="domain" description="Olduvai 7" evidence="2">
    <location>
        <begin position="844"/>
        <end position="904"/>
    </location>
</feature>
<feature type="region of interest" description="Disordered" evidence="3">
    <location>
        <begin position="161"/>
        <end position="203"/>
    </location>
</feature>
<feature type="region of interest" description="Disordered" evidence="3">
    <location>
        <begin position="451"/>
        <end position="474"/>
    </location>
</feature>
<feature type="region of interest" description="Disordered" evidence="3">
    <location>
        <begin position="528"/>
        <end position="566"/>
    </location>
</feature>
<feature type="region of interest" description="Disordered" evidence="3">
    <location>
        <begin position="831"/>
        <end position="863"/>
    </location>
</feature>
<feature type="coiled-coil region" evidence="1">
    <location>
        <begin position="89"/>
        <end position="130"/>
    </location>
</feature>
<feature type="coiled-coil region" evidence="1">
    <location>
        <begin position="339"/>
        <end position="401"/>
    </location>
</feature>
<feature type="compositionally biased region" description="Acidic residues" evidence="3">
    <location>
        <begin position="165"/>
        <end position="180"/>
    </location>
</feature>
<feature type="compositionally biased region" description="Basic and acidic residues" evidence="3">
    <location>
        <begin position="190"/>
        <end position="201"/>
    </location>
</feature>
<feature type="compositionally biased region" description="Acidic residues" evidence="3">
    <location>
        <begin position="530"/>
        <end position="539"/>
    </location>
</feature>
<feature type="compositionally biased region" description="Acidic residues" evidence="3">
    <location>
        <begin position="550"/>
        <end position="562"/>
    </location>
</feature>
<feature type="compositionally biased region" description="Basic residues" evidence="3">
    <location>
        <begin position="831"/>
        <end position="849"/>
    </location>
</feature>
<proteinExistence type="evidence at transcript level"/>
<accession>Q3BBV2</accession>
<accession>A0A8V8TN03</accession>
<organism>
    <name type="scientific">Homo sapiens</name>
    <name type="common">Human</name>
    <dbReference type="NCBI Taxonomy" id="9606"/>
    <lineage>
        <taxon>Eukaryota</taxon>
        <taxon>Metazoa</taxon>
        <taxon>Chordata</taxon>
        <taxon>Craniata</taxon>
        <taxon>Vertebrata</taxon>
        <taxon>Euteleostomi</taxon>
        <taxon>Mammalia</taxon>
        <taxon>Eutheria</taxon>
        <taxon>Euarchontoglires</taxon>
        <taxon>Primates</taxon>
        <taxon>Haplorrhini</taxon>
        <taxon>Catarrhini</taxon>
        <taxon>Hominidae</taxon>
        <taxon>Homo</taxon>
    </lineage>
</organism>
<sequence>MVVSAGPWSSEKAEMNILEINEKLRPQLAENKQQFVNLKERCFLTQLAGFLANRQKKYKYEECKDLIRFMLRNERQFKEEKLAEQLKQAEELRQYKVLVHSQERELTQLKEKLQEGRDASRSLNEHLQALLTLDEPDKSQGQDLQEQLAEGCRLAQHLVQKLSPENDEDEDEDVQVEEDEKVQKSSAPREVQKAEESKVPEDSLEECAITCSNSHGPCDSNQPHKNIKITFEEDEVNSTLVVDRESSHDECQDALNILSVPGPTSSATNVSMVVSAGPLSSEKAEMNILEINEKLHPQLAEKKQQFRNLKEKCFLTQLAGFLANRQNKYKYEECKDLIKSMLRNERQFKEEKLAEQLKQAEELRQYKVLVHTQERELTQLREKLREGRDASLSLNEHLQALLTPDEPDKSQGQDLQEQLAEGCRLAQHLVQKLSPENDNDDDEDVQVEVAEKVQKSSAPREMQKAEEKEVPEDSLEECAITYSNSHGPYDSNQPHRKTKITFEEDKVDSALIGSSSHVEWEDAVHIIPENESDDEEEEEKGPVSPRNLQESEEEEVPQESWDEGYSTLSIPPEMLASYKSYSSTFHSLEEQQVCMAVDIGRHRWDQVKKEDQEATGPRLSRELLDEKGPEVLQDSLDRCYSTPSGCLELTDSCQPYRSAFYILEQQRVGLAVDMDEIEKYQEVEEDQDPSCPRLSRELLDEKEPEVLQDSLDRCYSTPSGYLELPDLGQPYSSAVYSLEEQYLGLALDVDRIKKDQEEEEDQGPPCPRLSRELLEVVEPEVLQDSLDRCYSTPSSCLEQPDSCQPYGSSFYALEEKHVGFSLDVGEIEKKGKGKIRRGRRSKKKRRRGRKEGEEDQNPPCPRLNSVLMEVEEPEVLQDSLDRCYSTPSMYCELRDSFQHYRSVFYSFEEQHISFALDMDNRFFTLTVTSLYLVFQMGVIFPQ</sequence>
<gene>
    <name evidence="6" type="primary">NBPF8</name>
    <name type="synonym">NBPF8P</name>
</gene>